<organism>
    <name type="scientific">Homo sapiens</name>
    <name type="common">Human</name>
    <dbReference type="NCBI Taxonomy" id="9606"/>
    <lineage>
        <taxon>Eukaryota</taxon>
        <taxon>Metazoa</taxon>
        <taxon>Chordata</taxon>
        <taxon>Craniata</taxon>
        <taxon>Vertebrata</taxon>
        <taxon>Euteleostomi</taxon>
        <taxon>Mammalia</taxon>
        <taxon>Eutheria</taxon>
        <taxon>Euarchontoglires</taxon>
        <taxon>Primates</taxon>
        <taxon>Haplorrhini</taxon>
        <taxon>Catarrhini</taxon>
        <taxon>Hominidae</taxon>
        <taxon>Homo</taxon>
    </lineage>
</organism>
<dbReference type="EC" id="3.1.3.95" evidence="9 11 15"/>
<dbReference type="EMBL" id="AB028996">
    <property type="protein sequence ID" value="BAA83025.2"/>
    <property type="status" value="ALT_INIT"/>
    <property type="molecule type" value="mRNA"/>
</dbReference>
<dbReference type="EMBL" id="AK302940">
    <property type="protein sequence ID" value="BAG64098.1"/>
    <property type="molecule type" value="mRNA"/>
</dbReference>
<dbReference type="EMBL" id="AP000870">
    <property type="status" value="NOT_ANNOTATED_CDS"/>
    <property type="molecule type" value="Genomic_DNA"/>
</dbReference>
<dbReference type="EMBL" id="AP001877">
    <property type="status" value="NOT_ANNOTATED_CDS"/>
    <property type="molecule type" value="Genomic_DNA"/>
</dbReference>
<dbReference type="EMBL" id="CH471065">
    <property type="protein sequence ID" value="EAW66971.1"/>
    <property type="molecule type" value="Genomic_DNA"/>
</dbReference>
<dbReference type="EMBL" id="BC052990">
    <property type="protein sequence ID" value="AAH52990.1"/>
    <property type="molecule type" value="mRNA"/>
</dbReference>
<dbReference type="EMBL" id="U58033">
    <property type="protein sequence ID" value="AAC79118.1"/>
    <property type="molecule type" value="mRNA"/>
</dbReference>
<dbReference type="CCDS" id="CCDS8305.1">
    <molecule id="Q13614-1"/>
</dbReference>
<dbReference type="CCDS" id="CCDS8306.1">
    <molecule id="Q13614-2"/>
</dbReference>
<dbReference type="PIR" id="T09497">
    <property type="entry name" value="T09497"/>
</dbReference>
<dbReference type="RefSeq" id="NP_001230500.1">
    <molecule id="Q13614-2"/>
    <property type="nucleotide sequence ID" value="NM_001243571.2"/>
</dbReference>
<dbReference type="RefSeq" id="NP_057240.3">
    <molecule id="Q13614-1"/>
    <property type="nucleotide sequence ID" value="NM_016156.5"/>
</dbReference>
<dbReference type="RefSeq" id="NP_958435.1">
    <molecule id="Q13614-2"/>
    <property type="nucleotide sequence ID" value="NM_201278.3"/>
</dbReference>
<dbReference type="RefSeq" id="NP_958438.1">
    <molecule id="Q13614-2"/>
    <property type="nucleotide sequence ID" value="NM_201281.3"/>
</dbReference>
<dbReference type="RefSeq" id="XP_005274431.1">
    <property type="nucleotide sequence ID" value="XM_005274374.2"/>
</dbReference>
<dbReference type="RefSeq" id="XP_005274432.1">
    <property type="nucleotide sequence ID" value="XM_005274375.2"/>
</dbReference>
<dbReference type="RefSeq" id="XP_006718997.1">
    <property type="nucleotide sequence ID" value="XM_006718934.2"/>
</dbReference>
<dbReference type="RefSeq" id="XP_006718998.1">
    <property type="nucleotide sequence ID" value="XM_006718935.2"/>
</dbReference>
<dbReference type="RefSeq" id="XP_006718999.1">
    <property type="nucleotide sequence ID" value="XM_006718936.3"/>
</dbReference>
<dbReference type="RefSeq" id="XP_016874006.1">
    <property type="nucleotide sequence ID" value="XM_017018517.1"/>
</dbReference>
<dbReference type="RefSeq" id="XP_016874007.1">
    <property type="nucleotide sequence ID" value="XM_017018518.1"/>
</dbReference>
<dbReference type="RefSeq" id="XP_047283762.1">
    <molecule id="Q13614-2"/>
    <property type="nucleotide sequence ID" value="XM_047427806.1"/>
</dbReference>
<dbReference type="RefSeq" id="XP_047283763.1">
    <molecule id="Q13614-2"/>
    <property type="nucleotide sequence ID" value="XM_047427807.1"/>
</dbReference>
<dbReference type="RefSeq" id="XP_047283764.1">
    <molecule id="Q13614-2"/>
    <property type="nucleotide sequence ID" value="XM_047427808.1"/>
</dbReference>
<dbReference type="RefSeq" id="XP_054226342.1">
    <molecule id="Q13614-2"/>
    <property type="nucleotide sequence ID" value="XM_054370367.1"/>
</dbReference>
<dbReference type="RefSeq" id="XP_054226343.1">
    <molecule id="Q13614-2"/>
    <property type="nucleotide sequence ID" value="XM_054370368.1"/>
</dbReference>
<dbReference type="RefSeq" id="XP_054226344.1">
    <molecule id="Q13614-2"/>
    <property type="nucleotide sequence ID" value="XM_054370369.1"/>
</dbReference>
<dbReference type="PDB" id="1LW3">
    <property type="method" value="X-ray"/>
    <property type="resolution" value="2.30 A"/>
    <property type="chains" value="A=1-643"/>
</dbReference>
<dbReference type="PDB" id="1M7R">
    <property type="method" value="X-ray"/>
    <property type="resolution" value="2.60 A"/>
    <property type="chains" value="A/B=1-643"/>
</dbReference>
<dbReference type="PDB" id="1ZSQ">
    <property type="method" value="X-ray"/>
    <property type="resolution" value="1.82 A"/>
    <property type="chains" value="A=73-586"/>
</dbReference>
<dbReference type="PDB" id="1ZVR">
    <property type="method" value="X-ray"/>
    <property type="resolution" value="1.98 A"/>
    <property type="chains" value="A=73-586"/>
</dbReference>
<dbReference type="PDB" id="5GNH">
    <property type="method" value="X-ray"/>
    <property type="resolution" value="2.60 A"/>
    <property type="chains" value="A/B=73-643"/>
</dbReference>
<dbReference type="PDBsum" id="1LW3"/>
<dbReference type="PDBsum" id="1M7R"/>
<dbReference type="PDBsum" id="1ZSQ"/>
<dbReference type="PDBsum" id="1ZVR"/>
<dbReference type="PDBsum" id="5GNH"/>
<dbReference type="SMR" id="Q13614"/>
<dbReference type="BioGRID" id="114415">
    <property type="interactions" value="69"/>
</dbReference>
<dbReference type="FunCoup" id="Q13614">
    <property type="interactions" value="1680"/>
</dbReference>
<dbReference type="IntAct" id="Q13614">
    <property type="interactions" value="32"/>
</dbReference>
<dbReference type="MINT" id="Q13614"/>
<dbReference type="STRING" id="9606.ENSP00000345752"/>
<dbReference type="SwissLipids" id="SLP:000001135"/>
<dbReference type="DEPOD" id="MTMR2"/>
<dbReference type="GlyGen" id="Q13614">
    <property type="glycosylation" value="1 site, 1 O-linked glycan (1 site)"/>
</dbReference>
<dbReference type="iPTMnet" id="Q13614"/>
<dbReference type="MetOSite" id="Q13614"/>
<dbReference type="PhosphoSitePlus" id="Q13614"/>
<dbReference type="SwissPalm" id="Q13614"/>
<dbReference type="BioMuta" id="MTMR2"/>
<dbReference type="DMDM" id="212276520"/>
<dbReference type="jPOST" id="Q13614"/>
<dbReference type="MassIVE" id="Q13614"/>
<dbReference type="PaxDb" id="9606-ENSP00000345752"/>
<dbReference type="PeptideAtlas" id="Q13614"/>
<dbReference type="ProteomicsDB" id="1592"/>
<dbReference type="ProteomicsDB" id="59600">
    <molecule id="Q13614-1"/>
</dbReference>
<dbReference type="Pumba" id="Q13614"/>
<dbReference type="Antibodypedia" id="31676">
    <property type="antibodies" value="270 antibodies from 30 providers"/>
</dbReference>
<dbReference type="DNASU" id="8898"/>
<dbReference type="Ensembl" id="ENST00000346299.10">
    <molecule id="Q13614-1"/>
    <property type="protein sequence ID" value="ENSP00000345752.6"/>
    <property type="gene ID" value="ENSG00000087053.20"/>
</dbReference>
<dbReference type="Ensembl" id="ENST00000352297.11">
    <molecule id="Q13614-2"/>
    <property type="protein sequence ID" value="ENSP00000343737.7"/>
    <property type="gene ID" value="ENSG00000087053.20"/>
</dbReference>
<dbReference type="Ensembl" id="ENST00000393223.8">
    <molecule id="Q13614-2"/>
    <property type="protein sequence ID" value="ENSP00000376915.3"/>
    <property type="gene ID" value="ENSG00000087053.20"/>
</dbReference>
<dbReference type="Ensembl" id="ENST00000409459.5">
    <molecule id="Q13614-2"/>
    <property type="protein sequence ID" value="ENSP00000386882.1"/>
    <property type="gene ID" value="ENSG00000087053.20"/>
</dbReference>
<dbReference type="Ensembl" id="ENST00000444541.7">
    <molecule id="Q13614-2"/>
    <property type="protein sequence ID" value="ENSP00000396020.2"/>
    <property type="gene ID" value="ENSG00000087053.20"/>
</dbReference>
<dbReference type="Ensembl" id="ENST00000470293.6">
    <molecule id="Q13614-2"/>
    <property type="protein sequence ID" value="ENSP00000502515.1"/>
    <property type="gene ID" value="ENSG00000087053.20"/>
</dbReference>
<dbReference type="Ensembl" id="ENST00000481642.6">
    <molecule id="Q13614-2"/>
    <property type="protein sequence ID" value="ENSP00000502505.1"/>
    <property type="gene ID" value="ENSG00000087053.20"/>
</dbReference>
<dbReference type="Ensembl" id="ENST00000484818.6">
    <molecule id="Q13614-2"/>
    <property type="protein sequence ID" value="ENSP00000501963.1"/>
    <property type="gene ID" value="ENSG00000087053.20"/>
</dbReference>
<dbReference type="Ensembl" id="ENST00000495134.6">
    <molecule id="Q13614-2"/>
    <property type="protein sequence ID" value="ENSP00000501894.1"/>
    <property type="gene ID" value="ENSG00000087053.20"/>
</dbReference>
<dbReference type="Ensembl" id="ENST00000497683.6">
    <molecule id="Q13614-2"/>
    <property type="protein sequence ID" value="ENSP00000501753.1"/>
    <property type="gene ID" value="ENSG00000087053.20"/>
</dbReference>
<dbReference type="Ensembl" id="ENST00000674528.1">
    <molecule id="Q13614-2"/>
    <property type="protein sequence ID" value="ENSP00000501567.1"/>
    <property type="gene ID" value="ENSG00000087053.20"/>
</dbReference>
<dbReference type="Ensembl" id="ENST00000674610.1">
    <molecule id="Q13614-2"/>
    <property type="protein sequence ID" value="ENSP00000501688.1"/>
    <property type="gene ID" value="ENSG00000087053.20"/>
</dbReference>
<dbReference type="Ensembl" id="ENST00000674924.1">
    <molecule id="Q13614-2"/>
    <property type="protein sequence ID" value="ENSP00000502433.1"/>
    <property type="gene ID" value="ENSG00000087053.20"/>
</dbReference>
<dbReference type="Ensembl" id="ENST00000674968.1">
    <molecule id="Q13614-2"/>
    <property type="protein sequence ID" value="ENSP00000502567.1"/>
    <property type="gene ID" value="ENSG00000087053.20"/>
</dbReference>
<dbReference type="Ensembl" id="ENST00000674989.1">
    <molecule id="Q13614-2"/>
    <property type="protein sequence ID" value="ENSP00000502829.1"/>
    <property type="gene ID" value="ENSG00000087053.20"/>
</dbReference>
<dbReference type="Ensembl" id="ENST00000675174.1">
    <molecule id="Q13614-2"/>
    <property type="protein sequence ID" value="ENSP00000502032.1"/>
    <property type="gene ID" value="ENSG00000087053.20"/>
</dbReference>
<dbReference type="Ensembl" id="ENST00000675196.1">
    <molecule id="Q13614-2"/>
    <property type="protein sequence ID" value="ENSP00000501867.1"/>
    <property type="gene ID" value="ENSG00000087053.20"/>
</dbReference>
<dbReference type="Ensembl" id="ENST00000675362.1">
    <molecule id="Q13614-2"/>
    <property type="protein sequence ID" value="ENSP00000501989.1"/>
    <property type="gene ID" value="ENSG00000087053.20"/>
</dbReference>
<dbReference type="Ensembl" id="ENST00000675454.1">
    <molecule id="Q13614-2"/>
    <property type="protein sequence ID" value="ENSP00000501781.1"/>
    <property type="gene ID" value="ENSG00000087053.20"/>
</dbReference>
<dbReference type="Ensembl" id="ENST00000675477.1">
    <molecule id="Q13614-2"/>
    <property type="protein sequence ID" value="ENSP00000501751.1"/>
    <property type="gene ID" value="ENSG00000087053.20"/>
</dbReference>
<dbReference type="Ensembl" id="ENST00000675489.1">
    <molecule id="Q13614-2"/>
    <property type="protein sequence ID" value="ENSP00000501702.1"/>
    <property type="gene ID" value="ENSG00000087053.20"/>
</dbReference>
<dbReference type="Ensembl" id="ENST00000675636.1">
    <molecule id="Q13614-2"/>
    <property type="protein sequence ID" value="ENSP00000501850.1"/>
    <property type="gene ID" value="ENSG00000087053.20"/>
</dbReference>
<dbReference type="Ensembl" id="ENST00000675652.1">
    <molecule id="Q13614-2"/>
    <property type="protein sequence ID" value="ENSP00000502694.1"/>
    <property type="gene ID" value="ENSG00000087053.20"/>
</dbReference>
<dbReference type="Ensembl" id="ENST00000675933.1">
    <molecule id="Q13614-2"/>
    <property type="protein sequence ID" value="ENSP00000502575.1"/>
    <property type="gene ID" value="ENSG00000087053.20"/>
</dbReference>
<dbReference type="Ensembl" id="ENST00000675981.1">
    <molecule id="Q13614-2"/>
    <property type="protein sequence ID" value="ENSP00000502204.1"/>
    <property type="gene ID" value="ENSG00000087053.20"/>
</dbReference>
<dbReference type="Ensembl" id="ENST00000676166.1">
    <molecule id="Q13614-2"/>
    <property type="protein sequence ID" value="ENSP00000501632.1"/>
    <property type="gene ID" value="ENSG00000087053.20"/>
</dbReference>
<dbReference type="Ensembl" id="ENST00000676261.1">
    <molecule id="Q13614-2"/>
    <property type="protein sequence ID" value="ENSP00000501675.1"/>
    <property type="gene ID" value="ENSG00000087053.20"/>
</dbReference>
<dbReference type="Ensembl" id="ENST00000676272.1">
    <molecule id="Q13614-2"/>
    <property type="protein sequence ID" value="ENSP00000501601.1"/>
    <property type="gene ID" value="ENSG00000087053.20"/>
</dbReference>
<dbReference type="Ensembl" id="ENST00000676378.1">
    <molecule id="Q13614-2"/>
    <property type="protein sequence ID" value="ENSP00000502736.1"/>
    <property type="gene ID" value="ENSG00000087053.20"/>
</dbReference>
<dbReference type="Ensembl" id="ENST00000676440.1">
    <molecule id="Q13614-2"/>
    <property type="protein sequence ID" value="ENSP00000501926.1"/>
    <property type="gene ID" value="ENSG00000087053.20"/>
</dbReference>
<dbReference type="GeneID" id="8898"/>
<dbReference type="KEGG" id="hsa:8898"/>
<dbReference type="MANE-Select" id="ENST00000346299.10">
    <property type="protein sequence ID" value="ENSP00000345752.6"/>
    <property type="RefSeq nucleotide sequence ID" value="NM_016156.6"/>
    <property type="RefSeq protein sequence ID" value="NP_057240.3"/>
</dbReference>
<dbReference type="UCSC" id="uc001pft.4">
    <molecule id="Q13614-1"/>
    <property type="organism name" value="human"/>
</dbReference>
<dbReference type="AGR" id="HGNC:7450"/>
<dbReference type="CTD" id="8898"/>
<dbReference type="DisGeNET" id="8898"/>
<dbReference type="GeneCards" id="MTMR2"/>
<dbReference type="GeneReviews" id="MTMR2"/>
<dbReference type="HGNC" id="HGNC:7450">
    <property type="gene designation" value="MTMR2"/>
</dbReference>
<dbReference type="HPA" id="ENSG00000087053">
    <property type="expression patterns" value="Low tissue specificity"/>
</dbReference>
<dbReference type="MalaCards" id="MTMR2"/>
<dbReference type="MIM" id="601382">
    <property type="type" value="phenotype"/>
</dbReference>
<dbReference type="MIM" id="603557">
    <property type="type" value="gene"/>
</dbReference>
<dbReference type="neXtProt" id="NX_Q13614"/>
<dbReference type="OpenTargets" id="ENSG00000087053"/>
<dbReference type="Orphanet" id="99955">
    <property type="disease" value="Charcot-Marie-Tooth disease type 4B1"/>
</dbReference>
<dbReference type="PharmGKB" id="PA31253"/>
<dbReference type="VEuPathDB" id="HostDB:ENSG00000087053"/>
<dbReference type="eggNOG" id="KOG4471">
    <property type="taxonomic scope" value="Eukaryota"/>
</dbReference>
<dbReference type="GeneTree" id="ENSGT00940000153669"/>
<dbReference type="InParanoid" id="Q13614"/>
<dbReference type="OMA" id="WRATKIN"/>
<dbReference type="OrthoDB" id="271628at2759"/>
<dbReference type="PAN-GO" id="Q13614">
    <property type="GO annotations" value="5 GO annotations based on evolutionary models"/>
</dbReference>
<dbReference type="PhylomeDB" id="Q13614"/>
<dbReference type="TreeFam" id="TF315197"/>
<dbReference type="BRENDA" id="3.1.3.64">
    <property type="organism ID" value="2681"/>
</dbReference>
<dbReference type="BRENDA" id="3.1.3.95">
    <property type="organism ID" value="2681"/>
</dbReference>
<dbReference type="PathwayCommons" id="Q13614"/>
<dbReference type="Reactome" id="R-HSA-1483248">
    <property type="pathway name" value="Synthesis of PIPs at the ER membrane"/>
</dbReference>
<dbReference type="Reactome" id="R-HSA-1660499">
    <property type="pathway name" value="Synthesis of PIPs at the plasma membrane"/>
</dbReference>
<dbReference type="Reactome" id="R-HSA-1660516">
    <property type="pathway name" value="Synthesis of PIPs at the early endosome membrane"/>
</dbReference>
<dbReference type="Reactome" id="R-HSA-1660517">
    <property type="pathway name" value="Synthesis of PIPs at the late endosome membrane"/>
</dbReference>
<dbReference type="SignaLink" id="Q13614"/>
<dbReference type="SIGNOR" id="Q13614"/>
<dbReference type="BioGRID-ORCS" id="8898">
    <property type="hits" value="15 hits in 1177 CRISPR screens"/>
</dbReference>
<dbReference type="ChiTaRS" id="MTMR2">
    <property type="organism name" value="human"/>
</dbReference>
<dbReference type="EvolutionaryTrace" id="Q13614"/>
<dbReference type="GeneWiki" id="MTMR2"/>
<dbReference type="GenomeRNAi" id="8898"/>
<dbReference type="Pharos" id="Q13614">
    <property type="development level" value="Tbio"/>
</dbReference>
<dbReference type="PRO" id="PR:Q13614"/>
<dbReference type="Proteomes" id="UP000005640">
    <property type="component" value="Chromosome 11"/>
</dbReference>
<dbReference type="RNAct" id="Q13614">
    <property type="molecule type" value="protein"/>
</dbReference>
<dbReference type="Bgee" id="ENSG00000087053">
    <property type="expression patterns" value="Expressed in sperm and 212 other cell types or tissues"/>
</dbReference>
<dbReference type="ExpressionAtlas" id="Q13614">
    <property type="expression patterns" value="baseline and differential"/>
</dbReference>
<dbReference type="GO" id="GO:0030424">
    <property type="term" value="C:axon"/>
    <property type="evidence" value="ECO:0000250"/>
    <property type="project" value="BHF-UCL"/>
</dbReference>
<dbReference type="GO" id="GO:0005737">
    <property type="term" value="C:cytoplasm"/>
    <property type="evidence" value="ECO:0000314"/>
    <property type="project" value="UniProtKB"/>
</dbReference>
<dbReference type="GO" id="GO:0005829">
    <property type="term" value="C:cytosol"/>
    <property type="evidence" value="ECO:0000314"/>
    <property type="project" value="UniProtKB"/>
</dbReference>
<dbReference type="GO" id="GO:0030425">
    <property type="term" value="C:dendrite"/>
    <property type="evidence" value="ECO:0000250"/>
    <property type="project" value="BHF-UCL"/>
</dbReference>
<dbReference type="GO" id="GO:0043197">
    <property type="term" value="C:dendritic spine"/>
    <property type="evidence" value="ECO:0000250"/>
    <property type="project" value="BHF-UCL"/>
</dbReference>
<dbReference type="GO" id="GO:0031901">
    <property type="term" value="C:early endosome membrane"/>
    <property type="evidence" value="ECO:0007669"/>
    <property type="project" value="UniProtKB-SubCell"/>
</dbReference>
<dbReference type="GO" id="GO:0070062">
    <property type="term" value="C:extracellular exosome"/>
    <property type="evidence" value="ECO:0007005"/>
    <property type="project" value="UniProtKB"/>
</dbReference>
<dbReference type="GO" id="GO:0043231">
    <property type="term" value="C:intracellular membrane-bounded organelle"/>
    <property type="evidence" value="ECO:0000314"/>
    <property type="project" value="HPA"/>
</dbReference>
<dbReference type="GO" id="GO:0016020">
    <property type="term" value="C:membrane"/>
    <property type="evidence" value="ECO:0000318"/>
    <property type="project" value="GO_Central"/>
</dbReference>
<dbReference type="GO" id="GO:0005634">
    <property type="term" value="C:nucleus"/>
    <property type="evidence" value="ECO:0000314"/>
    <property type="project" value="UniProtKB"/>
</dbReference>
<dbReference type="GO" id="GO:0048471">
    <property type="term" value="C:perinuclear region of cytoplasm"/>
    <property type="evidence" value="ECO:0007669"/>
    <property type="project" value="UniProtKB-SubCell"/>
</dbReference>
<dbReference type="GO" id="GO:0014069">
    <property type="term" value="C:postsynaptic density"/>
    <property type="evidence" value="ECO:0000250"/>
    <property type="project" value="BHF-UCL"/>
</dbReference>
<dbReference type="GO" id="GO:0097060">
    <property type="term" value="C:synaptic membrane"/>
    <property type="evidence" value="ECO:0000250"/>
    <property type="project" value="BHF-UCL"/>
</dbReference>
<dbReference type="GO" id="GO:0008021">
    <property type="term" value="C:synaptic vesicle"/>
    <property type="evidence" value="ECO:0000250"/>
    <property type="project" value="BHF-UCL"/>
</dbReference>
<dbReference type="GO" id="GO:0005774">
    <property type="term" value="C:vacuolar membrane"/>
    <property type="evidence" value="ECO:0007669"/>
    <property type="project" value="Ensembl"/>
</dbReference>
<dbReference type="GO" id="GO:0042802">
    <property type="term" value="F:identical protein binding"/>
    <property type="evidence" value="ECO:0007669"/>
    <property type="project" value="Ensembl"/>
</dbReference>
<dbReference type="GO" id="GO:0052629">
    <property type="term" value="F:phosphatidylinositol-3,5-bisphosphate 3-phosphatase activity"/>
    <property type="evidence" value="ECO:0000314"/>
    <property type="project" value="UniProtKB"/>
</dbReference>
<dbReference type="GO" id="GO:0004438">
    <property type="term" value="F:phosphatidylinositol-3-phosphate phosphatase activity"/>
    <property type="evidence" value="ECO:0000314"/>
    <property type="project" value="UniProtKB"/>
</dbReference>
<dbReference type="GO" id="GO:0097062">
    <property type="term" value="P:dendritic spine maintenance"/>
    <property type="evidence" value="ECO:0000250"/>
    <property type="project" value="BHF-UCL"/>
</dbReference>
<dbReference type="GO" id="GO:0032288">
    <property type="term" value="P:myelin assembly"/>
    <property type="evidence" value="ECO:0007669"/>
    <property type="project" value="Ensembl"/>
</dbReference>
<dbReference type="GO" id="GO:0045806">
    <property type="term" value="P:negative regulation of endocytosis"/>
    <property type="evidence" value="ECO:0000250"/>
    <property type="project" value="BHF-UCL"/>
</dbReference>
<dbReference type="GO" id="GO:0090394">
    <property type="term" value="P:negative regulation of excitatory postsynaptic potential"/>
    <property type="evidence" value="ECO:0000250"/>
    <property type="project" value="BHF-UCL"/>
</dbReference>
<dbReference type="GO" id="GO:0031642">
    <property type="term" value="P:negative regulation of myelination"/>
    <property type="evidence" value="ECO:0007669"/>
    <property type="project" value="Ensembl"/>
</dbReference>
<dbReference type="GO" id="GO:2000645">
    <property type="term" value="P:negative regulation of receptor catabolic process"/>
    <property type="evidence" value="ECO:0000250"/>
    <property type="project" value="BHF-UCL"/>
</dbReference>
<dbReference type="GO" id="GO:0002091">
    <property type="term" value="P:negative regulation of receptor internalization"/>
    <property type="evidence" value="ECO:0000250"/>
    <property type="project" value="BHF-UCL"/>
</dbReference>
<dbReference type="GO" id="GO:0048666">
    <property type="term" value="P:neuron development"/>
    <property type="evidence" value="ECO:0007669"/>
    <property type="project" value="Ensembl"/>
</dbReference>
<dbReference type="GO" id="GO:0006661">
    <property type="term" value="P:phosphatidylinositol biosynthetic process"/>
    <property type="evidence" value="ECO:0000304"/>
    <property type="project" value="Reactome"/>
</dbReference>
<dbReference type="GO" id="GO:0046856">
    <property type="term" value="P:phosphatidylinositol dephosphorylation"/>
    <property type="evidence" value="ECO:0000314"/>
    <property type="project" value="UniProtKB"/>
</dbReference>
<dbReference type="GO" id="GO:2000643">
    <property type="term" value="P:positive regulation of early endosome to late endosome transport"/>
    <property type="evidence" value="ECO:0000250"/>
    <property type="project" value="BHF-UCL"/>
</dbReference>
<dbReference type="GO" id="GO:0060304">
    <property type="term" value="P:regulation of phosphatidylinositol dephosphorylation"/>
    <property type="evidence" value="ECO:0000314"/>
    <property type="project" value="UniProtKB"/>
</dbReference>
<dbReference type="CDD" id="cd14590">
    <property type="entry name" value="PTP-MTMR2"/>
    <property type="match status" value="1"/>
</dbReference>
<dbReference type="FunFam" id="2.30.29.30:FF:000038">
    <property type="entry name" value="Myotubularin 1, isoform CRA_a"/>
    <property type="match status" value="1"/>
</dbReference>
<dbReference type="Gene3D" id="2.30.29.30">
    <property type="entry name" value="Pleckstrin-homology domain (PH domain)/Phosphotyrosine-binding domain (PTB)"/>
    <property type="match status" value="1"/>
</dbReference>
<dbReference type="InterPro" id="IPR004182">
    <property type="entry name" value="GRAM"/>
</dbReference>
<dbReference type="InterPro" id="IPR030564">
    <property type="entry name" value="Myotubularin"/>
</dbReference>
<dbReference type="InterPro" id="IPR010569">
    <property type="entry name" value="Myotubularin-like_Pase_dom"/>
</dbReference>
<dbReference type="InterPro" id="IPR011993">
    <property type="entry name" value="PH-like_dom_sf"/>
</dbReference>
<dbReference type="InterPro" id="IPR029021">
    <property type="entry name" value="Prot-tyrosine_phosphatase-like"/>
</dbReference>
<dbReference type="InterPro" id="IPR016130">
    <property type="entry name" value="Tyr_Pase_AS"/>
</dbReference>
<dbReference type="InterPro" id="IPR003595">
    <property type="entry name" value="Tyr_Pase_cat"/>
</dbReference>
<dbReference type="InterPro" id="IPR000387">
    <property type="entry name" value="Tyr_Pase_dom"/>
</dbReference>
<dbReference type="PANTHER" id="PTHR10807">
    <property type="entry name" value="MYOTUBULARIN-RELATED"/>
    <property type="match status" value="1"/>
</dbReference>
<dbReference type="PANTHER" id="PTHR10807:SF42">
    <property type="entry name" value="MYOTUBULARIN-RELATED PROTEIN 2"/>
    <property type="match status" value="1"/>
</dbReference>
<dbReference type="Pfam" id="PF02893">
    <property type="entry name" value="GRAM"/>
    <property type="match status" value="1"/>
</dbReference>
<dbReference type="Pfam" id="PF06602">
    <property type="entry name" value="Myotub-related"/>
    <property type="match status" value="1"/>
</dbReference>
<dbReference type="SMART" id="SM00568">
    <property type="entry name" value="GRAM"/>
    <property type="match status" value="1"/>
</dbReference>
<dbReference type="SMART" id="SM00404">
    <property type="entry name" value="PTPc_motif"/>
    <property type="match status" value="1"/>
</dbReference>
<dbReference type="SUPFAM" id="SSF52799">
    <property type="entry name" value="(Phosphotyrosine protein) phosphatases II"/>
    <property type="match status" value="1"/>
</dbReference>
<dbReference type="SUPFAM" id="SSF50729">
    <property type="entry name" value="PH domain-like"/>
    <property type="match status" value="1"/>
</dbReference>
<dbReference type="PROSITE" id="PS51339">
    <property type="entry name" value="PPASE_MYOTUBULARIN"/>
    <property type="match status" value="1"/>
</dbReference>
<dbReference type="PROSITE" id="PS00383">
    <property type="entry name" value="TYR_PHOSPHATASE_1"/>
    <property type="match status" value="1"/>
</dbReference>
<dbReference type="PROSITE" id="PS50056">
    <property type="entry name" value="TYR_PHOSPHATASE_2"/>
    <property type="match status" value="1"/>
</dbReference>
<feature type="chain" id="PRO_0000094934" description="Phosphatidylinositol-3,5-bisphosphate 3-phosphatase MTMR2">
    <location>
        <begin position="1"/>
        <end position="643"/>
    </location>
</feature>
<feature type="domain" description="GRAM" evidence="2">
    <location>
        <begin position="68"/>
        <end position="139"/>
    </location>
</feature>
<feature type="domain" description="Myotubularin phosphatase" evidence="3">
    <location>
        <begin position="205"/>
        <end position="580"/>
    </location>
</feature>
<feature type="region of interest" description="Disordered" evidence="4">
    <location>
        <begin position="1"/>
        <end position="56"/>
    </location>
</feature>
<feature type="region of interest" description="Disordered" evidence="4">
    <location>
        <begin position="615"/>
        <end position="643"/>
    </location>
</feature>
<feature type="coiled-coil region" evidence="14">
    <location>
        <begin position="593"/>
        <end position="627"/>
    </location>
</feature>
<feature type="compositionally biased region" description="Polar residues" evidence="4">
    <location>
        <begin position="1"/>
        <end position="12"/>
    </location>
</feature>
<feature type="compositionally biased region" description="Polar residues" evidence="4">
    <location>
        <begin position="23"/>
        <end position="40"/>
    </location>
</feature>
<feature type="compositionally biased region" description="Low complexity" evidence="4">
    <location>
        <begin position="41"/>
        <end position="55"/>
    </location>
</feature>
<feature type="compositionally biased region" description="Low complexity" evidence="4">
    <location>
        <begin position="620"/>
        <end position="631"/>
    </location>
</feature>
<feature type="compositionally biased region" description="Polar residues" evidence="4">
    <location>
        <begin position="632"/>
        <end position="643"/>
    </location>
</feature>
<feature type="active site" description="Phosphocysteine intermediate" evidence="11 14">
    <location>
        <position position="417"/>
    </location>
</feature>
<feature type="binding site" evidence="22 29">
    <location>
        <position position="330"/>
    </location>
    <ligand>
        <name>a 1,2-diacyl-sn-glycero-3-phospho-(1D-myo-inositol-3,5-bisphosphate)</name>
        <dbReference type="ChEBI" id="CHEBI:57923"/>
    </ligand>
</feature>
<feature type="binding site" evidence="22 28">
    <location>
        <position position="330"/>
    </location>
    <ligand>
        <name>a 1,2-diacyl-sn-glycero-3-phospho-(1D-myo-inositol-3-phosphate)</name>
        <dbReference type="ChEBI" id="CHEBI:58088"/>
    </ligand>
</feature>
<feature type="binding site" evidence="22 29">
    <location>
        <position position="355"/>
    </location>
    <ligand>
        <name>a 1,2-diacyl-sn-glycero-3-phospho-(1D-myo-inositol-3,5-bisphosphate)</name>
        <dbReference type="ChEBI" id="CHEBI:57923"/>
    </ligand>
</feature>
<feature type="binding site" evidence="22 28">
    <location>
        <position position="355"/>
    </location>
    <ligand>
        <name>a 1,2-diacyl-sn-glycero-3-phospho-(1D-myo-inositol-3-phosphate)</name>
        <dbReference type="ChEBI" id="CHEBI:58088"/>
    </ligand>
</feature>
<feature type="binding site" evidence="22 29">
    <location>
        <position position="356"/>
    </location>
    <ligand>
        <name>a 1,2-diacyl-sn-glycero-3-phospho-(1D-myo-inositol-3,5-bisphosphate)</name>
        <dbReference type="ChEBI" id="CHEBI:57923"/>
    </ligand>
</feature>
<feature type="binding site" evidence="22 28">
    <location>
        <position position="356"/>
    </location>
    <ligand>
        <name>a 1,2-diacyl-sn-glycero-3-phospho-(1D-myo-inositol-3-phosphate)</name>
        <dbReference type="ChEBI" id="CHEBI:58088"/>
    </ligand>
</feature>
<feature type="binding site" evidence="22 29">
    <location>
        <position position="418"/>
    </location>
    <ligand>
        <name>a 1,2-diacyl-sn-glycero-3-phospho-(1D-myo-inositol-3,5-bisphosphate)</name>
        <dbReference type="ChEBI" id="CHEBI:57923"/>
    </ligand>
</feature>
<feature type="binding site" evidence="22 28">
    <location>
        <position position="418"/>
    </location>
    <ligand>
        <name>a 1,2-diacyl-sn-glycero-3-phospho-(1D-myo-inositol-3-phosphate)</name>
        <dbReference type="ChEBI" id="CHEBI:58088"/>
    </ligand>
</feature>
<feature type="binding site" evidence="22 29">
    <location>
        <position position="419"/>
    </location>
    <ligand>
        <name>a 1,2-diacyl-sn-glycero-3-phospho-(1D-myo-inositol-3,5-bisphosphate)</name>
        <dbReference type="ChEBI" id="CHEBI:57923"/>
    </ligand>
</feature>
<feature type="binding site" evidence="22 28">
    <location>
        <position position="419"/>
    </location>
    <ligand>
        <name>a 1,2-diacyl-sn-glycero-3-phospho-(1D-myo-inositol-3-phosphate)</name>
        <dbReference type="ChEBI" id="CHEBI:58088"/>
    </ligand>
</feature>
<feature type="binding site" evidence="22 29">
    <location>
        <position position="420"/>
    </location>
    <ligand>
        <name>a 1,2-diacyl-sn-glycero-3-phospho-(1D-myo-inositol-3,5-bisphosphate)</name>
        <dbReference type="ChEBI" id="CHEBI:57923"/>
    </ligand>
</feature>
<feature type="binding site" evidence="22 28">
    <location>
        <position position="420"/>
    </location>
    <ligand>
        <name>a 1,2-diacyl-sn-glycero-3-phospho-(1D-myo-inositol-3-phosphate)</name>
        <dbReference type="ChEBI" id="CHEBI:58088"/>
    </ligand>
</feature>
<feature type="binding site" evidence="22 29">
    <location>
        <position position="421"/>
    </location>
    <ligand>
        <name>a 1,2-diacyl-sn-glycero-3-phospho-(1D-myo-inositol-3,5-bisphosphate)</name>
        <dbReference type="ChEBI" id="CHEBI:57923"/>
    </ligand>
</feature>
<feature type="binding site" evidence="22 28">
    <location>
        <position position="421"/>
    </location>
    <ligand>
        <name>a 1,2-diacyl-sn-glycero-3-phospho-(1D-myo-inositol-3-phosphate)</name>
        <dbReference type="ChEBI" id="CHEBI:58088"/>
    </ligand>
</feature>
<feature type="binding site" evidence="22 29">
    <location>
        <position position="422"/>
    </location>
    <ligand>
        <name>a 1,2-diacyl-sn-glycero-3-phospho-(1D-myo-inositol-3,5-bisphosphate)</name>
        <dbReference type="ChEBI" id="CHEBI:57923"/>
    </ligand>
</feature>
<feature type="binding site" evidence="22 28">
    <location>
        <position position="422"/>
    </location>
    <ligand>
        <name>a 1,2-diacyl-sn-glycero-3-phospho-(1D-myo-inositol-3-phosphate)</name>
        <dbReference type="ChEBI" id="CHEBI:58088"/>
    </ligand>
</feature>
<feature type="binding site" evidence="22 29">
    <location>
        <position position="423"/>
    </location>
    <ligand>
        <name>a 1,2-diacyl-sn-glycero-3-phospho-(1D-myo-inositol-3,5-bisphosphate)</name>
        <dbReference type="ChEBI" id="CHEBI:57923"/>
    </ligand>
</feature>
<feature type="binding site" evidence="22 28">
    <location>
        <position position="423"/>
    </location>
    <ligand>
        <name>a 1,2-diacyl-sn-glycero-3-phospho-(1D-myo-inositol-3-phosphate)</name>
        <dbReference type="ChEBI" id="CHEBI:58088"/>
    </ligand>
</feature>
<feature type="binding site" evidence="22 29">
    <location>
        <position position="459"/>
    </location>
    <ligand>
        <name>a 1,2-diacyl-sn-glycero-3-phospho-(1D-myo-inositol-3,5-bisphosphate)</name>
        <dbReference type="ChEBI" id="CHEBI:57923"/>
    </ligand>
</feature>
<feature type="binding site" evidence="22 29">
    <location>
        <position position="463"/>
    </location>
    <ligand>
        <name>a 1,2-diacyl-sn-glycero-3-phospho-(1D-myo-inositol-3,5-bisphosphate)</name>
        <dbReference type="ChEBI" id="CHEBI:57923"/>
    </ligand>
</feature>
<feature type="binding site" evidence="22 28">
    <location>
        <position position="463"/>
    </location>
    <ligand>
        <name>a 1,2-diacyl-sn-glycero-3-phospho-(1D-myo-inositol-3-phosphate)</name>
        <dbReference type="ChEBI" id="CHEBI:58088"/>
    </ligand>
</feature>
<feature type="modified residue" description="Phosphoserine" evidence="1">
    <location>
        <position position="6"/>
    </location>
</feature>
<feature type="modified residue" description="Phosphoserine" evidence="1">
    <location>
        <position position="9"/>
    </location>
</feature>
<feature type="modified residue" description="Phosphoserine" evidence="15 30 31">
    <location>
        <position position="58"/>
    </location>
</feature>
<feature type="splice variant" id="VSP_044933" description="In isoform 2." evidence="18">
    <location>
        <begin position="1"/>
        <end position="72"/>
    </location>
</feature>
<feature type="sequence variant" id="VAR_047255" description="In dbSNP:rs3824874." evidence="5 12">
    <original>K</original>
    <variation>T</variation>
    <location>
        <position position="3"/>
    </location>
</feature>
<feature type="sequence variant" id="VAR_047947" description="In CMT4B1; dbSNP:rs1590983932." evidence="8">
    <original>R</original>
    <variation>W</variation>
    <location>
        <position position="283"/>
    </location>
</feature>
<feature type="sequence variant" id="VAR_047256" description="In dbSNP:rs558018.">
    <original>N</original>
    <variation>S</variation>
    <location>
        <position position="545"/>
    </location>
</feature>
<feature type="mutagenesis site" description="Decreased phosphatidylinositol-3,5-bisphosphate 3-phosphatase activity. Decreased phosphatidylinositol-3-phosphate phosphatase activity." evidence="11">
    <original>N</original>
    <variation>D</variation>
    <location>
        <position position="330"/>
    </location>
</feature>
<feature type="mutagenesis site" description="Decreased phosphatidylinositol-3,5-bisphosphate 3-phosphatase activity. Decreased phosphatidylinositol-3-phosphate phosphatase activity." evidence="11">
    <original>H</original>
    <variation>N</variation>
    <location>
        <position position="357"/>
    </location>
</feature>
<feature type="mutagenesis site" description="Loss of phosphatidylinositol-3,5-bisphosphate 3-phosphatase activity. Loss of phosphatidylinositol-3-phosphate phosphatase activity." evidence="11">
    <original>C</original>
    <variation>S</variation>
    <location>
        <position position="417"/>
    </location>
</feature>
<feature type="mutagenesis site" description="No effect on phosphatidylinositol-3,5-bisphosphate 3-phosphatase activity. Decreased phosphatidylinositol-3-phosphate phosphatase activity." evidence="11">
    <original>D</original>
    <variation>A</variation>
    <location>
        <position position="419"/>
    </location>
</feature>
<feature type="mutagenesis site" description="Loss of phosphatidylinositol-3,5-bisphosphate 3-phosphatase activity. Loss of phosphatidylinositol-3-phosphate phosphatase activity." evidence="11">
    <original>D</original>
    <variation>A</variation>
    <location>
        <position position="422"/>
    </location>
</feature>
<feature type="mutagenesis site" description="Loss of homodimerization. Loss of interaction with SBF1." evidence="9">
    <location>
        <begin position="589"/>
        <end position="643"/>
    </location>
</feature>
<feature type="mutagenesis site" description="Decreased homodimerization. Decreased interaction with SBF1." evidence="9">
    <original>L</original>
    <variation>Y</variation>
    <location>
        <position position="607"/>
    </location>
</feature>
<feature type="strand" evidence="32">
    <location>
        <begin position="84"/>
        <end position="95"/>
    </location>
</feature>
<feature type="turn" evidence="32">
    <location>
        <begin position="96"/>
        <end position="98"/>
    </location>
</feature>
<feature type="strand" evidence="32">
    <location>
        <begin position="99"/>
        <end position="121"/>
    </location>
</feature>
<feature type="strand" evidence="32">
    <location>
        <begin position="123"/>
        <end position="128"/>
    </location>
</feature>
<feature type="helix" evidence="32">
    <location>
        <begin position="129"/>
        <end position="131"/>
    </location>
</feature>
<feature type="strand" evidence="32">
    <location>
        <begin position="132"/>
        <end position="138"/>
    </location>
</feature>
<feature type="strand" evidence="33">
    <location>
        <begin position="145"/>
        <end position="147"/>
    </location>
</feature>
<feature type="strand" evidence="32">
    <location>
        <begin position="149"/>
        <end position="155"/>
    </location>
</feature>
<feature type="turn" evidence="32">
    <location>
        <begin position="156"/>
        <end position="158"/>
    </location>
</feature>
<feature type="strand" evidence="32">
    <location>
        <begin position="159"/>
        <end position="164"/>
    </location>
</feature>
<feature type="helix" evidence="32">
    <location>
        <begin position="167"/>
        <end position="169"/>
    </location>
</feature>
<feature type="helix" evidence="32">
    <location>
        <begin position="172"/>
        <end position="182"/>
    </location>
</feature>
<feature type="turn" evidence="32">
    <location>
        <begin position="185"/>
        <end position="189"/>
    </location>
</feature>
<feature type="helix" evidence="32">
    <location>
        <begin position="193"/>
        <end position="195"/>
    </location>
</feature>
<feature type="helix" evidence="32">
    <location>
        <begin position="205"/>
        <end position="207"/>
    </location>
</feature>
<feature type="helix" evidence="32">
    <location>
        <begin position="211"/>
        <end position="217"/>
    </location>
</feature>
<feature type="strand" evidence="32">
    <location>
        <begin position="223"/>
        <end position="228"/>
    </location>
</feature>
<feature type="turn" evidence="32">
    <location>
        <begin position="230"/>
        <end position="233"/>
    </location>
</feature>
<feature type="strand" evidence="32">
    <location>
        <begin position="234"/>
        <end position="236"/>
    </location>
</feature>
<feature type="strand" evidence="32">
    <location>
        <begin position="242"/>
        <end position="247"/>
    </location>
</feature>
<feature type="helix" evidence="32">
    <location>
        <begin position="252"/>
        <end position="261"/>
    </location>
</feature>
<feature type="helix" evidence="32">
    <location>
        <begin position="263"/>
        <end position="265"/>
    </location>
</feature>
<feature type="strand" evidence="32">
    <location>
        <begin position="269"/>
        <end position="273"/>
    </location>
</feature>
<feature type="turn" evidence="32">
    <location>
        <begin position="275"/>
        <end position="277"/>
    </location>
</feature>
<feature type="strand" evidence="32">
    <location>
        <begin position="280"/>
        <end position="284"/>
    </location>
</feature>
<feature type="turn" evidence="32">
    <location>
        <begin position="290"/>
        <end position="293"/>
    </location>
</feature>
<feature type="helix" evidence="32">
    <location>
        <begin position="297"/>
        <end position="309"/>
    </location>
</feature>
<feature type="strand" evidence="32">
    <location>
        <begin position="310"/>
        <end position="312"/>
    </location>
</feature>
<feature type="strand" evidence="32">
    <location>
        <begin position="314"/>
        <end position="320"/>
    </location>
</feature>
<feature type="helix" evidence="32">
    <location>
        <begin position="324"/>
        <end position="333"/>
    </location>
</feature>
<feature type="turn" evidence="32">
    <location>
        <begin position="340"/>
        <end position="342"/>
    </location>
</feature>
<feature type="strand" evidence="32">
    <location>
        <begin position="346"/>
        <end position="350"/>
    </location>
</feature>
<feature type="helix" evidence="32">
    <location>
        <begin position="356"/>
        <end position="370"/>
    </location>
</feature>
<feature type="helix" evidence="32">
    <location>
        <begin position="376"/>
        <end position="378"/>
    </location>
</feature>
<feature type="helix" evidence="32">
    <location>
        <begin position="379"/>
        <end position="386"/>
    </location>
</feature>
<feature type="helix" evidence="32">
    <location>
        <begin position="388"/>
        <end position="407"/>
    </location>
</feature>
<feature type="strand" evidence="32">
    <location>
        <begin position="413"/>
        <end position="416"/>
    </location>
</feature>
<feature type="strand" evidence="32">
    <location>
        <begin position="418"/>
        <end position="422"/>
    </location>
</feature>
<feature type="helix" evidence="32">
    <location>
        <begin position="423"/>
        <end position="435"/>
    </location>
</feature>
<feature type="helix" evidence="32">
    <location>
        <begin position="437"/>
        <end position="440"/>
    </location>
</feature>
<feature type="helix" evidence="32">
    <location>
        <begin position="442"/>
        <end position="452"/>
    </location>
</feature>
<feature type="turn" evidence="32">
    <location>
        <begin position="453"/>
        <end position="457"/>
    </location>
</feature>
<feature type="helix" evidence="32">
    <location>
        <begin position="460"/>
        <end position="464"/>
    </location>
</feature>
<feature type="turn" evidence="32">
    <location>
        <begin position="465"/>
        <end position="467"/>
    </location>
</feature>
<feature type="helix" evidence="32">
    <location>
        <begin position="479"/>
        <end position="493"/>
    </location>
</feature>
<feature type="turn" evidence="32">
    <location>
        <begin position="495"/>
        <end position="497"/>
    </location>
</feature>
<feature type="helix" evidence="32">
    <location>
        <begin position="502"/>
        <end position="514"/>
    </location>
</feature>
<feature type="strand" evidence="32">
    <location>
        <begin position="516"/>
        <end position="518"/>
    </location>
</feature>
<feature type="strand" evidence="32">
    <location>
        <begin position="522"/>
        <end position="524"/>
    </location>
</feature>
<feature type="helix" evidence="32">
    <location>
        <begin position="525"/>
        <end position="530"/>
    </location>
</feature>
<feature type="helix" evidence="32">
    <location>
        <begin position="533"/>
        <end position="536"/>
    </location>
</feature>
<feature type="helix" evidence="32">
    <location>
        <begin position="540"/>
        <end position="545"/>
    </location>
</feature>
<feature type="helix" evidence="32">
    <location>
        <begin position="548"/>
        <end position="551"/>
    </location>
</feature>
<feature type="turn" evidence="32">
    <location>
        <begin position="554"/>
        <end position="557"/>
    </location>
</feature>
<feature type="strand" evidence="32">
    <location>
        <begin position="560"/>
        <end position="562"/>
    </location>
</feature>
<feature type="turn" evidence="32">
    <location>
        <begin position="570"/>
        <end position="572"/>
    </location>
</feature>
<feature type="helix" evidence="32">
    <location>
        <begin position="577"/>
        <end position="580"/>
    </location>
</feature>
<proteinExistence type="evidence at protein level"/>
<name>MTMR2_HUMAN</name>
<gene>
    <name evidence="25" type="primary">MTMR2</name>
    <name evidence="24" type="synonym">KIAA1073</name>
</gene>
<evidence type="ECO:0000250" key="1">
    <source>
        <dbReference type="UniProtKB" id="Q9Z2D1"/>
    </source>
</evidence>
<evidence type="ECO:0000255" key="2"/>
<evidence type="ECO:0000255" key="3">
    <source>
        <dbReference type="PROSITE-ProRule" id="PRU00669"/>
    </source>
</evidence>
<evidence type="ECO:0000256" key="4">
    <source>
        <dbReference type="SAM" id="MobiDB-lite"/>
    </source>
</evidence>
<evidence type="ECO:0000269" key="5">
    <source>
    </source>
</evidence>
<evidence type="ECO:0000269" key="6">
    <source>
    </source>
</evidence>
<evidence type="ECO:0000269" key="7">
    <source>
    </source>
</evidence>
<evidence type="ECO:0000269" key="8">
    <source>
    </source>
</evidence>
<evidence type="ECO:0000269" key="9">
    <source>
    </source>
</evidence>
<evidence type="ECO:0000269" key="10">
    <source>
    </source>
</evidence>
<evidence type="ECO:0000269" key="11">
    <source>
    </source>
</evidence>
<evidence type="ECO:0000269" key="12">
    <source>
    </source>
</evidence>
<evidence type="ECO:0000269" key="13">
    <source>
    </source>
</evidence>
<evidence type="ECO:0000269" key="14">
    <source>
    </source>
</evidence>
<evidence type="ECO:0000269" key="15">
    <source>
    </source>
</evidence>
<evidence type="ECO:0000269" key="16">
    <source>
    </source>
</evidence>
<evidence type="ECO:0000269" key="17">
    <source>
    </source>
</evidence>
<evidence type="ECO:0000303" key="18">
    <source>
    </source>
</evidence>
<evidence type="ECO:0000305" key="19"/>
<evidence type="ECO:0000305" key="20">
    <source>
    </source>
</evidence>
<evidence type="ECO:0000305" key="21">
    <source>
    </source>
</evidence>
<evidence type="ECO:0000305" key="22">
    <source>
    </source>
</evidence>
<evidence type="ECO:0000305" key="23">
    <source>
    </source>
</evidence>
<evidence type="ECO:0000312" key="24">
    <source>
        <dbReference type="EMBL" id="BAA83025.2"/>
    </source>
</evidence>
<evidence type="ECO:0000312" key="25">
    <source>
        <dbReference type="HGNC" id="HGNC:7450"/>
    </source>
</evidence>
<evidence type="ECO:0007744" key="26">
    <source>
        <dbReference type="PDB" id="1LW3"/>
    </source>
</evidence>
<evidence type="ECO:0007744" key="27">
    <source>
        <dbReference type="PDB" id="1M7R"/>
    </source>
</evidence>
<evidence type="ECO:0007744" key="28">
    <source>
        <dbReference type="PDB" id="1ZSQ"/>
    </source>
</evidence>
<evidence type="ECO:0007744" key="29">
    <source>
        <dbReference type="PDB" id="1ZVR"/>
    </source>
</evidence>
<evidence type="ECO:0007744" key="30">
    <source>
    </source>
</evidence>
<evidence type="ECO:0007744" key="31">
    <source>
    </source>
</evidence>
<evidence type="ECO:0007829" key="32">
    <source>
        <dbReference type="PDB" id="1ZSQ"/>
    </source>
</evidence>
<evidence type="ECO:0007829" key="33">
    <source>
        <dbReference type="PDB" id="1ZVR"/>
    </source>
</evidence>
<protein>
    <recommendedName>
        <fullName evidence="20 21">Phosphatidylinositol-3,5-bisphosphate 3-phosphatase MTMR2</fullName>
        <ecNumber evidence="9 11 15">3.1.3.95</ecNumber>
    </recommendedName>
    <alternativeName>
        <fullName evidence="25">Myotubularin-related protein 2</fullName>
    </alternativeName>
    <alternativeName>
        <fullName evidence="21">Phosphatidylinositol-3-phosphate phosphatase</fullName>
    </alternativeName>
</protein>
<comment type="function">
    <text evidence="7 9 11 15 17">Lipid phosphatase that specifically dephosphorylates the D-3 position of phosphatidylinositol 3-phosphate and phosphatidylinositol 3,5-bisphosphate, generating phosphatidylinositol and phosphatidylinositol 5-phosphate (PubMed:11733541, PubMed:12668758, PubMed:14690594, PubMed:21372139). Regulates the level of these phosphoinositides critical for various biological processes including autophagy initiation and autophagosome maturation (PubMed:35580604).</text>
</comment>
<comment type="catalytic activity">
    <reaction evidence="9 11 15">
        <text>a 1,2-diacyl-sn-glycero-3-phospho-(1D-myo-inositol-3,5-bisphosphate) + H2O = a 1,2-diacyl-sn-glycero-3-phospho-(1D-myo-inositol-5-phosphate) + phosphate</text>
        <dbReference type="Rhea" id="RHEA:39019"/>
        <dbReference type="ChEBI" id="CHEBI:15377"/>
        <dbReference type="ChEBI" id="CHEBI:43474"/>
        <dbReference type="ChEBI" id="CHEBI:57795"/>
        <dbReference type="ChEBI" id="CHEBI:57923"/>
        <dbReference type="EC" id="3.1.3.95"/>
    </reaction>
    <physiologicalReaction direction="left-to-right" evidence="21">
        <dbReference type="Rhea" id="RHEA:39020"/>
    </physiologicalReaction>
</comment>
<comment type="catalytic activity">
    <reaction evidence="7 9 11 15">
        <text>a 1,2-diacyl-sn-glycero-3-phospho-(1D-myo-inositol-3-phosphate) + H2O = a 1,2-diacyl-sn-glycero-3-phospho-(1D-myo-inositol) + phosphate</text>
        <dbReference type="Rhea" id="RHEA:12316"/>
        <dbReference type="ChEBI" id="CHEBI:15377"/>
        <dbReference type="ChEBI" id="CHEBI:43474"/>
        <dbReference type="ChEBI" id="CHEBI:57880"/>
        <dbReference type="ChEBI" id="CHEBI:58088"/>
    </reaction>
    <physiologicalReaction direction="left-to-right" evidence="20">
        <dbReference type="Rhea" id="RHEA:12317"/>
    </physiologicalReaction>
</comment>
<comment type="catalytic activity">
    <reaction evidence="7 15">
        <text>1,2-dioctanoyl-sn-glycero-3-phospho-(1-D-myo-inositol-3-phosphate) + H2O = 1,2-dioctanoyl-sn-glycero-3-phospho-(1D-myo-inositol) + phosphate</text>
        <dbReference type="Rhea" id="RHEA:42328"/>
        <dbReference type="ChEBI" id="CHEBI:15377"/>
        <dbReference type="ChEBI" id="CHEBI:43474"/>
        <dbReference type="ChEBI" id="CHEBI:65221"/>
        <dbReference type="ChEBI" id="CHEBI:78934"/>
    </reaction>
    <physiologicalReaction direction="left-to-right" evidence="20">
        <dbReference type="Rhea" id="RHEA:42329"/>
    </physiologicalReaction>
</comment>
<comment type="catalytic activity">
    <reaction evidence="15">
        <text>1,2-dioctanoyl-sn-glycero-3-phospho-(1D-myo-inositol-3,5-bisphosphate) + H2O = 1,2-dioctanoyl-sn-glycero-3-phospho-(1D-myo-inositol-5-phosphate) + phosphate</text>
        <dbReference type="Rhea" id="RHEA:45632"/>
        <dbReference type="ChEBI" id="CHEBI:15377"/>
        <dbReference type="ChEBI" id="CHEBI:43474"/>
        <dbReference type="ChEBI" id="CHEBI:78911"/>
        <dbReference type="ChEBI" id="CHEBI:85342"/>
    </reaction>
    <physiologicalReaction direction="left-to-right" evidence="23">
        <dbReference type="Rhea" id="RHEA:45633"/>
    </physiologicalReaction>
</comment>
<comment type="subunit">
    <text evidence="9 10 13 15 16">Homodimer (via coiled-coil domain) (PubMed:12668758, PubMed:15998640). Heterotetramer consisting of one MTMR2 dimer and one SBF2/MTMR13 dimer; specifically in peripheral nerves stabilizes SBF2/MTMR13 at the membranes and increases MTMR2 catalytic activity towards phosphatidylinositol 3,5-bisphosphate and to a lesser extent towards phosphatidylinositol 3-phosphate (PubMed:15998640, PubMed:34718573). Heterodimer with SBF1/MTMR5; acts as an adapter for the phosphatase MTMR2 to regulate MTMR2 catalytic activity and subcellular location (PubMed:12668758, PubMed:21372139, PubMed:34718573). Heterodimer with MTMR12 (PubMed:12847286).</text>
</comment>
<comment type="interaction">
    <interactant intactId="EBI-475631">
        <id>Q13614</id>
    </interactant>
    <interactant intactId="EBI-2829520">
        <id>Q9C0I1</id>
        <label>MTMR12</label>
    </interactant>
    <organismsDiffer>false</organismsDiffer>
    <experiments>3</experiments>
</comment>
<comment type="interaction">
    <interactant intactId="EBI-475631">
        <id>Q13614</id>
    </interactant>
    <interactant intactId="EBI-475646">
        <id>P07196</id>
        <label>NEFL</label>
    </interactant>
    <organismsDiffer>false</organismsDiffer>
    <experiments>2</experiments>
</comment>
<comment type="subcellular location">
    <subcellularLocation>
        <location evidence="7 9 13">Cytoplasm</location>
    </subcellularLocation>
    <subcellularLocation>
        <location evidence="13 15">Early endosome membrane</location>
        <topology evidence="13 15">Peripheral membrane protein</topology>
    </subcellularLocation>
    <subcellularLocation>
        <location evidence="9">Cytoplasm</location>
        <location evidence="9">Perinuclear region</location>
    </subcellularLocation>
    <subcellularLocation>
        <location evidence="1">Cell projection</location>
        <location evidence="1">Axon</location>
    </subcellularLocation>
    <subcellularLocation>
        <location evidence="1">Endosome membrane</location>
        <topology evidence="19">Peripheral membrane protein</topology>
    </subcellularLocation>
    <text evidence="1 9 13 15">Partly associated with membranes (PubMed:12668758, PubMed:15998640, PubMed:21372139). Localizes to vacuoles in hypo-osmotic conditions (By similarity).</text>
</comment>
<comment type="alternative products">
    <event type="alternative splicing"/>
    <isoform>
        <id>Q13614-1</id>
        <name>1</name>
        <sequence type="displayed"/>
    </isoform>
    <isoform>
        <id>Q13614-2</id>
        <name>2</name>
        <sequence type="described" ref="VSP_044933"/>
    </isoform>
</comment>
<comment type="domain">
    <text evidence="1 9 13">The coiled-coil domain mediates homodimerization (PubMed:12668758, PubMed:15998640). Also mediates interaction with SBF1/MTMR5 (PubMed:12668758). By mediating MTMR2 homodimerization, indirectly involved in SBF2/MTMR13 and MTMR2 heterotetramerization (By similarity).</text>
</comment>
<comment type="domain">
    <text evidence="1">The GRAM domain mediates binding to phosphatidylinositol 4-phosphate, phosphatidylinositol 5-phosphate, phosphatidylinositol 3,5-bisphosphate and phosphatidylinositol 3,4,5-trisphosphate.</text>
</comment>
<comment type="PTM">
    <text evidence="15">Phosphorylation at Ser-58 decreases MTMR2 localization to endocytic vesicular structures.</text>
</comment>
<comment type="disease" evidence="6 8">
    <disease id="DI-00286">
        <name>Charcot-Marie-Tooth disease, demyelinating, type 4B1</name>
        <acronym>CMT4B1</acronym>
        <description>A recessive demyelinating form of Charcot-Marie-Tooth disease, a disorder of the peripheral nervous system, characterized by progressive weakness and atrophy, initially of the peroneal muscles and later of the distal muscles of the arms. Charcot-Marie-Tooth disease is classified in two main groups on the basis of electrophysiologic properties and histopathology: primary peripheral demyelinating neuropathies (designated CMT1 when they are dominantly inherited) and primary peripheral axonal neuropathies (CMT2). Demyelinating neuropathies are characterized by severely reduced nerve conduction velocities (less than 38 m/sec), segmental demyelination and remyelination with onion bulb formations on nerve biopsy, slowly progressive distal muscle atrophy and weakness, absent deep tendon reflexes, and hollow feet. By convention autosomal recessive forms of demyelinating Charcot-Marie-Tooth disease are designated CMT4.</description>
        <dbReference type="MIM" id="601382"/>
    </disease>
    <text>The disease is caused by variants affecting the gene represented in this entry.</text>
</comment>
<comment type="similarity">
    <text evidence="19">Belongs to the protein-tyrosine phosphatase family. Non-receptor class myotubularin subfamily.</text>
</comment>
<comment type="sequence caution" evidence="19">
    <conflict type="erroneous initiation">
        <sequence resource="EMBL-CDS" id="BAA83025"/>
    </conflict>
</comment>
<comment type="online information" name="Inherited peripheral neuropathies mutation db">
    <link uri="https://uantwerpen.vib.be/CMTMutations"/>
</comment>
<reference key="1">
    <citation type="journal article" date="1999" name="DNA Res.">
        <title>Prediction of the coding sequences of unidentified human genes. XIV. The complete sequences of 100 new cDNA clones from brain which code for large proteins in vitro.</title>
        <authorList>
            <person name="Kikuno R."/>
            <person name="Nagase T."/>
            <person name="Ishikawa K."/>
            <person name="Hirosawa M."/>
            <person name="Miyajima N."/>
            <person name="Tanaka A."/>
            <person name="Kotani H."/>
            <person name="Nomura N."/>
            <person name="Ohara O."/>
        </authorList>
    </citation>
    <scope>NUCLEOTIDE SEQUENCE [LARGE SCALE MRNA] (ISOFORM 1)</scope>
    <scope>VARIANT THR-3</scope>
    <source>
        <tissue>Brain</tissue>
    </source>
</reference>
<reference key="2">
    <citation type="journal article" date="2004" name="Nat. Genet.">
        <title>Complete sequencing and characterization of 21,243 full-length human cDNAs.</title>
        <authorList>
            <person name="Ota T."/>
            <person name="Suzuki Y."/>
            <person name="Nishikawa T."/>
            <person name="Otsuki T."/>
            <person name="Sugiyama T."/>
            <person name="Irie R."/>
            <person name="Wakamatsu A."/>
            <person name="Hayashi K."/>
            <person name="Sato H."/>
            <person name="Nagai K."/>
            <person name="Kimura K."/>
            <person name="Makita H."/>
            <person name="Sekine M."/>
            <person name="Obayashi M."/>
            <person name="Nishi T."/>
            <person name="Shibahara T."/>
            <person name="Tanaka T."/>
            <person name="Ishii S."/>
            <person name="Yamamoto J."/>
            <person name="Saito K."/>
            <person name="Kawai Y."/>
            <person name="Isono Y."/>
            <person name="Nakamura Y."/>
            <person name="Nagahari K."/>
            <person name="Murakami K."/>
            <person name="Yasuda T."/>
            <person name="Iwayanagi T."/>
            <person name="Wagatsuma M."/>
            <person name="Shiratori A."/>
            <person name="Sudo H."/>
            <person name="Hosoiri T."/>
            <person name="Kaku Y."/>
            <person name="Kodaira H."/>
            <person name="Kondo H."/>
            <person name="Sugawara M."/>
            <person name="Takahashi M."/>
            <person name="Kanda K."/>
            <person name="Yokoi T."/>
            <person name="Furuya T."/>
            <person name="Kikkawa E."/>
            <person name="Omura Y."/>
            <person name="Abe K."/>
            <person name="Kamihara K."/>
            <person name="Katsuta N."/>
            <person name="Sato K."/>
            <person name="Tanikawa M."/>
            <person name="Yamazaki M."/>
            <person name="Ninomiya K."/>
            <person name="Ishibashi T."/>
            <person name="Yamashita H."/>
            <person name="Murakawa K."/>
            <person name="Fujimori K."/>
            <person name="Tanai H."/>
            <person name="Kimata M."/>
            <person name="Watanabe M."/>
            <person name="Hiraoka S."/>
            <person name="Chiba Y."/>
            <person name="Ishida S."/>
            <person name="Ono Y."/>
            <person name="Takiguchi S."/>
            <person name="Watanabe S."/>
            <person name="Yosida M."/>
            <person name="Hotuta T."/>
            <person name="Kusano J."/>
            <person name="Kanehori K."/>
            <person name="Takahashi-Fujii A."/>
            <person name="Hara H."/>
            <person name="Tanase T.-O."/>
            <person name="Nomura Y."/>
            <person name="Togiya S."/>
            <person name="Komai F."/>
            <person name="Hara R."/>
            <person name="Takeuchi K."/>
            <person name="Arita M."/>
            <person name="Imose N."/>
            <person name="Musashino K."/>
            <person name="Yuuki H."/>
            <person name="Oshima A."/>
            <person name="Sasaki N."/>
            <person name="Aotsuka S."/>
            <person name="Yoshikawa Y."/>
            <person name="Matsunawa H."/>
            <person name="Ichihara T."/>
            <person name="Shiohata N."/>
            <person name="Sano S."/>
            <person name="Moriya S."/>
            <person name="Momiyama H."/>
            <person name="Satoh N."/>
            <person name="Takami S."/>
            <person name="Terashima Y."/>
            <person name="Suzuki O."/>
            <person name="Nakagawa S."/>
            <person name="Senoh A."/>
            <person name="Mizoguchi H."/>
            <person name="Goto Y."/>
            <person name="Shimizu F."/>
            <person name="Wakebe H."/>
            <person name="Hishigaki H."/>
            <person name="Watanabe T."/>
            <person name="Sugiyama A."/>
            <person name="Takemoto M."/>
            <person name="Kawakami B."/>
            <person name="Yamazaki M."/>
            <person name="Watanabe K."/>
            <person name="Kumagai A."/>
            <person name="Itakura S."/>
            <person name="Fukuzumi Y."/>
            <person name="Fujimori Y."/>
            <person name="Komiyama M."/>
            <person name="Tashiro H."/>
            <person name="Tanigami A."/>
            <person name="Fujiwara T."/>
            <person name="Ono T."/>
            <person name="Yamada K."/>
            <person name="Fujii Y."/>
            <person name="Ozaki K."/>
            <person name="Hirao M."/>
            <person name="Ohmori Y."/>
            <person name="Kawabata A."/>
            <person name="Hikiji T."/>
            <person name="Kobatake N."/>
            <person name="Inagaki H."/>
            <person name="Ikema Y."/>
            <person name="Okamoto S."/>
            <person name="Okitani R."/>
            <person name="Kawakami T."/>
            <person name="Noguchi S."/>
            <person name="Itoh T."/>
            <person name="Shigeta K."/>
            <person name="Senba T."/>
            <person name="Matsumura K."/>
            <person name="Nakajima Y."/>
            <person name="Mizuno T."/>
            <person name="Morinaga M."/>
            <person name="Sasaki M."/>
            <person name="Togashi T."/>
            <person name="Oyama M."/>
            <person name="Hata H."/>
            <person name="Watanabe M."/>
            <person name="Komatsu T."/>
            <person name="Mizushima-Sugano J."/>
            <person name="Satoh T."/>
            <person name="Shirai Y."/>
            <person name="Takahashi Y."/>
            <person name="Nakagawa K."/>
            <person name="Okumura K."/>
            <person name="Nagase T."/>
            <person name="Nomura N."/>
            <person name="Kikuchi H."/>
            <person name="Masuho Y."/>
            <person name="Yamashita R."/>
            <person name="Nakai K."/>
            <person name="Yada T."/>
            <person name="Nakamura Y."/>
            <person name="Ohara O."/>
            <person name="Isogai T."/>
            <person name="Sugano S."/>
        </authorList>
    </citation>
    <scope>NUCLEOTIDE SEQUENCE [LARGE SCALE MRNA] (ISOFORM 2)</scope>
    <source>
        <tissue>Testis</tissue>
    </source>
</reference>
<reference key="3">
    <citation type="journal article" date="2006" name="Nature">
        <title>Human chromosome 11 DNA sequence and analysis including novel gene identification.</title>
        <authorList>
            <person name="Taylor T.D."/>
            <person name="Noguchi H."/>
            <person name="Totoki Y."/>
            <person name="Toyoda A."/>
            <person name="Kuroki Y."/>
            <person name="Dewar K."/>
            <person name="Lloyd C."/>
            <person name="Itoh T."/>
            <person name="Takeda T."/>
            <person name="Kim D.-W."/>
            <person name="She X."/>
            <person name="Barlow K.F."/>
            <person name="Bloom T."/>
            <person name="Bruford E."/>
            <person name="Chang J.L."/>
            <person name="Cuomo C.A."/>
            <person name="Eichler E."/>
            <person name="FitzGerald M.G."/>
            <person name="Jaffe D.B."/>
            <person name="LaButti K."/>
            <person name="Nicol R."/>
            <person name="Park H.-S."/>
            <person name="Seaman C."/>
            <person name="Sougnez C."/>
            <person name="Yang X."/>
            <person name="Zimmer A.R."/>
            <person name="Zody M.C."/>
            <person name="Birren B.W."/>
            <person name="Nusbaum C."/>
            <person name="Fujiyama A."/>
            <person name="Hattori M."/>
            <person name="Rogers J."/>
            <person name="Lander E.S."/>
            <person name="Sakaki Y."/>
        </authorList>
    </citation>
    <scope>NUCLEOTIDE SEQUENCE [LARGE SCALE GENOMIC DNA]</scope>
</reference>
<reference key="4">
    <citation type="submission" date="2005-07" db="EMBL/GenBank/DDBJ databases">
        <authorList>
            <person name="Mural R.J."/>
            <person name="Istrail S."/>
            <person name="Sutton G."/>
            <person name="Florea L."/>
            <person name="Halpern A.L."/>
            <person name="Mobarry C.M."/>
            <person name="Lippert R."/>
            <person name="Walenz B."/>
            <person name="Shatkay H."/>
            <person name="Dew I."/>
            <person name="Miller J.R."/>
            <person name="Flanigan M.J."/>
            <person name="Edwards N.J."/>
            <person name="Bolanos R."/>
            <person name="Fasulo D."/>
            <person name="Halldorsson B.V."/>
            <person name="Hannenhalli S."/>
            <person name="Turner R."/>
            <person name="Yooseph S."/>
            <person name="Lu F."/>
            <person name="Nusskern D.R."/>
            <person name="Shue B.C."/>
            <person name="Zheng X.H."/>
            <person name="Zhong F."/>
            <person name="Delcher A.L."/>
            <person name="Huson D.H."/>
            <person name="Kravitz S.A."/>
            <person name="Mouchard L."/>
            <person name="Reinert K."/>
            <person name="Remington K.A."/>
            <person name="Clark A.G."/>
            <person name="Waterman M.S."/>
            <person name="Eichler E.E."/>
            <person name="Adams M.D."/>
            <person name="Hunkapiller M.W."/>
            <person name="Myers E.W."/>
            <person name="Venter J.C."/>
        </authorList>
    </citation>
    <scope>NUCLEOTIDE SEQUENCE [LARGE SCALE GENOMIC DNA]</scope>
</reference>
<reference key="5">
    <citation type="journal article" date="2004" name="Genome Res.">
        <title>The status, quality, and expansion of the NIH full-length cDNA project: the Mammalian Gene Collection (MGC).</title>
        <authorList>
            <consortium name="The MGC Project Team"/>
        </authorList>
    </citation>
    <scope>NUCLEOTIDE SEQUENCE [LARGE SCALE MRNA] (ISOFORM 1)</scope>
    <scope>VARIANT THR-3</scope>
    <source>
        <tissue>Uterus</tissue>
    </source>
</reference>
<reference key="6">
    <citation type="journal article" date="1998" name="Hum. Mol. Genet.">
        <title>Characterization of the myotubularin dual specificity phosphatase gene family from yeast to human.</title>
        <authorList>
            <person name="Laporte J."/>
            <person name="Blondeau F."/>
            <person name="Buj-Bello A."/>
            <person name="Tentler D."/>
            <person name="Kretz C."/>
            <person name="Dahl N."/>
            <person name="Mandel J.-L."/>
        </authorList>
    </citation>
    <scope>NUCLEOTIDE SEQUENCE [MRNA] OF 384-643 (ISOFORM 1)</scope>
</reference>
<reference key="7">
    <citation type="journal article" date="1996" name="Nat. Genet.">
        <title>A gene mutated in X-linked myotubular myopathy defines a new putative tyrosine phosphatase family conserved in yeast.</title>
        <authorList>
            <person name="Laporte J."/>
            <person name="Hu L.-J."/>
            <person name="Kretz C."/>
            <person name="Mandel J.-L."/>
            <person name="Kioschis P."/>
            <person name="Coy J."/>
            <person name="Klauck S.M."/>
            <person name="Poutska A."/>
            <person name="Dahl N."/>
        </authorList>
    </citation>
    <scope>NUCLEOTIDE SEQUENCE [MRNA] OF 384-514 (ISOFORM 1)</scope>
</reference>
<reference key="8">
    <citation type="journal article" date="2000" name="Nat. Genet.">
        <title>Charcot-Marie-Tooth type 4B is caused by mutations in the gene encoding myotubularin-related protein-2.</title>
        <authorList>
            <person name="Bolino A."/>
            <person name="Muglia M."/>
            <person name="Conforti F.L."/>
            <person name="LeGuern E."/>
            <person name="Salih M.A.M."/>
            <person name="Georgiou D.-M."/>
            <person name="Christodoulou K."/>
            <person name="Hausmanowa-Petrusewicz I."/>
            <person name="Mandich P."/>
            <person name="Schenone A."/>
            <person name="Gambardella A."/>
            <person name="Bono F."/>
            <person name="Quattrone A."/>
            <person name="Devoto M."/>
            <person name="Monaco A.P."/>
        </authorList>
    </citation>
    <scope>INVOLVEMENT IN CMT4B1</scope>
</reference>
<reference key="9">
    <citation type="journal article" date="2002" name="J. Biol. Chem.">
        <title>Myotubularin and MTMR2, phosphatidylinositol 3-phosphatases mutated in myotubular myopathy and type 4B Charcot-Marie-Tooth disease.</title>
        <authorList>
            <person name="Kim S.A."/>
            <person name="Taylor G.S."/>
            <person name="Torgersen K.M."/>
            <person name="Dixon J.E."/>
        </authorList>
    </citation>
    <scope>FUNCTION</scope>
    <scope>CATALYTIC ACTIVITY</scope>
    <scope>SUBCELLULAR LOCATION</scope>
</reference>
<reference key="10">
    <citation type="journal article" date="2003" name="Proc. Natl. Acad. Sci. U.S.A.">
        <title>Regulation of myotubularin-related (MTMR)2 phosphatidylinositol phosphatase by MTMR5, a catalytically inactive phosphatase.</title>
        <authorList>
            <person name="Kim S.-A."/>
            <person name="Vacratsis P.O."/>
            <person name="Firestein R."/>
            <person name="Cleary M.L."/>
            <person name="Dixon J.E."/>
        </authorList>
    </citation>
    <scope>FUNCTION</scope>
    <scope>CATALYTIC ACTIVITY</scope>
    <scope>SUBUNIT</scope>
    <scope>INTERACTION WITH SBF1</scope>
    <scope>SUBCELLULAR LOCATION</scope>
    <scope>DOMAIN</scope>
    <scope>MUTAGENESIS OF 589-PRO--VAL-643 AND LEU-607</scope>
</reference>
<reference key="11">
    <citation type="journal article" date="2003" name="Proc. Natl. Acad. Sci. U.S.A.">
        <title>Identification of myotubularin as the lipid phosphatase catalytic subunit associated with the 3-phosphatase adapter protein, 3-PAP.</title>
        <authorList>
            <person name="Nandurkar H.H."/>
            <person name="Layton M."/>
            <person name="Laporte J."/>
            <person name="Selan C."/>
            <person name="Corcoran L."/>
            <person name="Caldwell K.K."/>
            <person name="Mochizuki Y."/>
            <person name="Majerus P.W."/>
            <person name="Mitchell C.A."/>
        </authorList>
    </citation>
    <scope>INTERACTION WITH MTMR12</scope>
</reference>
<reference key="12">
    <citation type="journal article" date="2005" name="J. Biol. Chem.">
        <title>The phosphoinositide-3-phosphatase MTMR2 associates with MTMR13, a membrane-associated pseudophosphatase also mutated in type 4B Charcot-Marie-Tooth disease.</title>
        <authorList>
            <person name="Robinson F.L."/>
            <person name="Dixon J.E."/>
        </authorList>
    </citation>
    <scope>INTERACTION WITH SBF2</scope>
    <scope>SUBUNIT</scope>
    <scope>SUBCELLULAR LOCATION</scope>
    <scope>DOMAIN</scope>
</reference>
<reference key="13">
    <citation type="journal article" date="2008" name="Proc. Natl. Acad. Sci. U.S.A.">
        <title>A quantitative atlas of mitotic phosphorylation.</title>
        <authorList>
            <person name="Dephoure N."/>
            <person name="Zhou C."/>
            <person name="Villen J."/>
            <person name="Beausoleil S.A."/>
            <person name="Bakalarski C.E."/>
            <person name="Elledge S.J."/>
            <person name="Gygi S.P."/>
        </authorList>
    </citation>
    <scope>PHOSPHORYLATION [LARGE SCALE ANALYSIS] AT SER-58</scope>
    <scope>IDENTIFICATION BY MASS SPECTROMETRY [LARGE SCALE ANALYSIS]</scope>
    <source>
        <tissue>Cervix carcinoma</tissue>
    </source>
</reference>
<reference key="14">
    <citation type="journal article" date="2009" name="Anal. Chem.">
        <title>Lys-N and trypsin cover complementary parts of the phosphoproteome in a refined SCX-based approach.</title>
        <authorList>
            <person name="Gauci S."/>
            <person name="Helbig A.O."/>
            <person name="Slijper M."/>
            <person name="Krijgsveld J."/>
            <person name="Heck A.J."/>
            <person name="Mohammed S."/>
        </authorList>
    </citation>
    <scope>IDENTIFICATION BY MASS SPECTROMETRY [LARGE SCALE ANALYSIS]</scope>
</reference>
<reference key="15">
    <citation type="journal article" date="2009" name="Sci. Signal.">
        <title>Quantitative phosphoproteomic analysis of T cell receptor signaling reveals system-wide modulation of protein-protein interactions.</title>
        <authorList>
            <person name="Mayya V."/>
            <person name="Lundgren D.H."/>
            <person name="Hwang S.-I."/>
            <person name="Rezaul K."/>
            <person name="Wu L."/>
            <person name="Eng J.K."/>
            <person name="Rodionov V."/>
            <person name="Han D.K."/>
        </authorList>
    </citation>
    <scope>PHOSPHORYLATION [LARGE SCALE ANALYSIS] AT SER-58</scope>
    <scope>IDENTIFICATION BY MASS SPECTROMETRY [LARGE SCALE ANALYSIS]</scope>
    <source>
        <tissue>Leukemic T-cell</tissue>
    </source>
</reference>
<reference key="16">
    <citation type="journal article" date="2010" name="Sci. Signal.">
        <title>Quantitative phosphoproteomics reveals widespread full phosphorylation site occupancy during mitosis.</title>
        <authorList>
            <person name="Olsen J.V."/>
            <person name="Vermeulen M."/>
            <person name="Santamaria A."/>
            <person name="Kumar C."/>
            <person name="Miller M.L."/>
            <person name="Jensen L.J."/>
            <person name="Gnad F."/>
            <person name="Cox J."/>
            <person name="Jensen T.S."/>
            <person name="Nigg E.A."/>
            <person name="Brunak S."/>
            <person name="Mann M."/>
        </authorList>
    </citation>
    <scope>IDENTIFICATION BY MASS SPECTROMETRY [LARGE SCALE ANALYSIS]</scope>
    <source>
        <tissue>Cervix carcinoma</tissue>
    </source>
</reference>
<reference key="17">
    <citation type="journal article" date="2011" name="J. Biol. Chem.">
        <title>Endosomal targeting of the phosphoinositide 3-phosphatase MTMR2 is regulated by an N-terminal phosphorylation site.</title>
        <authorList>
            <person name="Franklin N.E."/>
            <person name="Taylor G.S."/>
            <person name="Vacratsis P.O."/>
        </authorList>
    </citation>
    <scope>FUNCTION</scope>
    <scope>CATALYTIC ACTIVITY</scope>
    <scope>INTERACTION WITH SBF1</scope>
    <scope>SUBUNIT</scope>
    <scope>SUBCELLULAR LOCATION</scope>
    <scope>PHOSPHORYLATION AT SER-58</scope>
</reference>
<reference evidence="26 27" key="18">
    <citation type="journal article" date="2003" name="Mol. Cell">
        <title>Crystal structure of a phosphoinositide phosphatase, MTMR2: insights into myotubular myopathy and Charcot-Marie-Tooth syndrome.</title>
        <authorList>
            <person name="Begley M.J."/>
            <person name="Taylor G.S."/>
            <person name="Kim S.-A."/>
            <person name="Veine D.M."/>
            <person name="Dixon J.E."/>
            <person name="Stuckey J.A."/>
        </authorList>
    </citation>
    <scope>X-RAY CRYSTALLOGRAPHY (2.3 ANGSTROMS) OF MUTANT SER-417</scope>
    <scope>FUNCTION</scope>
    <scope>CATALYTIC ACTIVITY</scope>
    <scope>IDENTIFICATION BY MASS SPECTROMETRY</scope>
    <scope>ACTIVE SITE</scope>
    <scope>MUTAGENESIS OF ASN-330; HIS-357; CYS-417; ASP-419 AND ASP-422</scope>
</reference>
<reference evidence="28 29" key="19">
    <citation type="journal article" date="2006" name="Proc. Natl. Acad. Sci. U.S.A.">
        <title>Molecular basis for substrate recognition by MTMR2, a myotubularin family phosphoinositide phosphatase.</title>
        <authorList>
            <person name="Begley M.J."/>
            <person name="Taylor G.S."/>
            <person name="Brock M.A."/>
            <person name="Ghosh P."/>
            <person name="Woods V.L."/>
            <person name="Dixon J.E."/>
        </authorList>
    </citation>
    <scope>X-RAY CRYSTALLOGRAPHY (1.82 ANGSTROMS) OF 71-586 OF MUTANT SER-417 IN COMPLEX WITH PHOSPHATIDYLINOSITOL 3-PHOSPHATE AND PHOSPHATIDYLINOSITOL 3,5-BISPHOSPHATE ANALOGS</scope>
    <scope>COILED-COIL DOMAIN</scope>
    <scope>ACTIVE SITE</scope>
    <scope>IDENTIFICATION BY MASS SPECTROMETRY</scope>
</reference>
<reference key="20">
    <citation type="journal article" date="2002" name="Neuromuscul. Disord.">
        <title>A novel homozygous missense mutation in the myotubularin-related protein 2 gene associated with recessive Charcot-Marie-Tooth disease with irregularly folded myelin sheaths.</title>
        <authorList>
            <person name="Nelis E."/>
            <person name="Erdem S."/>
            <person name="Tan E."/>
            <person name="Loefgren A."/>
            <person name="Ceuterick C."/>
            <person name="De Jonghe P."/>
            <person name="Van Broeckhoven C."/>
            <person name="Timmerman V."/>
            <person name="Topaloglu H."/>
        </authorList>
    </citation>
    <scope>VARIANT CMT4B1 TRP-283</scope>
</reference>
<reference key="21">
    <citation type="journal article" date="2022" name="Curr. Biol.">
        <title>Myotubularin-related phosphatase 5 is a critical determinant of autophagy in neurons.</title>
        <authorList>
            <person name="Chua J.P."/>
            <person name="Bedi K."/>
            <person name="Paulsen M.T."/>
            <person name="Ljungman M."/>
            <person name="Tank E.M.H."/>
            <person name="Kim E.S."/>
            <person name="McBride J.P."/>
            <person name="Colon-Mercado J.M."/>
            <person name="Ward M.E."/>
            <person name="Weisman L.S."/>
            <person name="Barmada S.J."/>
        </authorList>
    </citation>
    <scope>FUNCTION</scope>
</reference>
<reference key="22">
    <citation type="journal article" date="2022" name="Hum. Mol. Genet.">
        <title>Distinct roles for the Charcot-Marie-Tooth disease-causing endosomal regulators Mtmr5 and Mtmr13 in axon radial sorting and Schwann cell myelination.</title>
        <authorList>
            <person name="Mammel A.E."/>
            <person name="Delgado K.C."/>
            <person name="Chin A.L."/>
            <person name="Condon A.F."/>
            <person name="Hill J.Q."/>
            <person name="Aicher S.A."/>
            <person name="Wang Y."/>
            <person name="Fedorov L.M."/>
            <person name="Robinson F.L."/>
        </authorList>
    </citation>
    <scope>INTERACTION WITH MTMR5 AND MTMR13</scope>
</reference>
<sequence length="643" mass="73381">MEKSSSCESLGSQPAAARPPSVDSLSSASTSHSENSVHTKSASVVSSDSISTSADNFSPDLRVLRESNKLAEMEEPPLLPGENIKDMAKDVTYICPFTGAVRGTLTVTNYRLYFKSMERDPPFVLDASLGVINRVEKIGGASSRGENSYGLETVCKDIRNLRFAHKPEGRTRRSIFENLMKYAFPVSNNLPLFAFEYKEVFPENGWKLYDPLLEYRRQGIPNESWRITKINERYELCDTYPALLVVPANIPDEELKRVASFRSRGRIPVLSWIHPESQATITRCSQPMVGVSGKRSKEDEKYLQAIMDSNAQSHKIFIFDARPSVNAVANKAKGGGYESEDAYQNAELVFLDIHNIHVMRESLRKLKEIVYPNIEETHWLSNLESTHWLEHIKLILAGALRIADKVESGKTSVVVHCSDGWDRTAQLTSLAMLMLDGYYRTIRGFEVLVEKEWLSFGHRFQLRVGHGDKNHADADRSPVFLQFIDCVWQMTRQFPTAFEFNEYFLITILDHLYSCLFGTFLCNSEQQRGKENLPKRTVSLWSYINSQLEDFTNPLYGSYSNHVLYPVASMRHLELWVGYYIRWNPRMKPQEPIHNRYKELLAKRAELQKKVEELQREISNRSTSSSERASSPAQCVTPVQTVV</sequence>
<accession>Q13614</accession>
<accession>A6NN98</accession>
<accession>Q9UPS9</accession>
<keyword id="KW-0002">3D-structure</keyword>
<keyword id="KW-0025">Alternative splicing</keyword>
<keyword id="KW-0966">Cell projection</keyword>
<keyword id="KW-0144">Charcot-Marie-Tooth disease</keyword>
<keyword id="KW-0175">Coiled coil</keyword>
<keyword id="KW-0963">Cytoplasm</keyword>
<keyword id="KW-0225">Disease variant</keyword>
<keyword id="KW-0967">Endosome</keyword>
<keyword id="KW-0378">Hydrolase</keyword>
<keyword id="KW-0443">Lipid metabolism</keyword>
<keyword id="KW-0472">Membrane</keyword>
<keyword id="KW-0523">Neurodegeneration</keyword>
<keyword id="KW-0622">Neuropathy</keyword>
<keyword id="KW-0597">Phosphoprotein</keyword>
<keyword id="KW-1267">Proteomics identification</keyword>
<keyword id="KW-1185">Reference proteome</keyword>